<organism>
    <name type="scientific">Candida albicans</name>
    <name type="common">Yeast</name>
    <dbReference type="NCBI Taxonomy" id="5476"/>
    <lineage>
        <taxon>Eukaryota</taxon>
        <taxon>Fungi</taxon>
        <taxon>Dikarya</taxon>
        <taxon>Ascomycota</taxon>
        <taxon>Saccharomycotina</taxon>
        <taxon>Pichiomycetes</taxon>
        <taxon>Debaryomycetaceae</taxon>
        <taxon>Candida/Lodderomyces clade</taxon>
        <taxon>Candida</taxon>
    </lineage>
</organism>
<keyword id="KW-0131">Cell cycle</keyword>
<keyword id="KW-0132">Cell division</keyword>
<keyword id="KW-0344">Guanine-nucleotide releasing factor</keyword>
<keyword id="KW-0498">Mitosis</keyword>
<keyword id="KW-0539">Nucleus</keyword>
<keyword id="KW-0677">Repeat</keyword>
<accession>P52499</accession>
<name>RCC1_CANAX</name>
<feature type="chain" id="PRO_0000206635" description="Protein RCC1">
    <location>
        <begin position="1"/>
        <end position="464"/>
    </location>
</feature>
<feature type="repeat" description="RCC1 1">
    <location>
        <begin position="23"/>
        <end position="82"/>
    </location>
</feature>
<feature type="repeat" description="RCC1 2">
    <location>
        <begin position="84"/>
        <end position="135"/>
    </location>
</feature>
<feature type="repeat" description="RCC1 3">
    <location>
        <begin position="162"/>
        <end position="216"/>
    </location>
</feature>
<feature type="repeat" description="RCC1 4">
    <location>
        <begin position="269"/>
        <end position="327"/>
    </location>
</feature>
<feature type="repeat" description="RCC1 5">
    <location>
        <begin position="329"/>
        <end position="390"/>
    </location>
</feature>
<feature type="repeat" description="RCC1 6">
    <location>
        <begin position="391"/>
        <end position="445"/>
    </location>
</feature>
<feature type="region of interest" description="Disordered" evidence="2">
    <location>
        <begin position="111"/>
        <end position="130"/>
    </location>
</feature>
<feature type="compositionally biased region" description="Acidic residues" evidence="2">
    <location>
        <begin position="118"/>
        <end position="130"/>
    </location>
</feature>
<proteinExistence type="inferred from homology"/>
<sequence>MFVLHSYSKLPNINEYAKAKSTPLDVFVWGTGSMCELGLGPSAKNKEVKRPRLNPYLTEEKLGGTKIVDFAVGGMHTLALDGKNRIWSWGGNDSEVLGRDTCQAKEVLKDIDGKNGNDDDDDDEDGDLNEAESTPALVENLPEGEIVQLAATDNLSAALLSNGDVYSWGCFRCNEGLLGFLRDEIKLQKTPLKIKELKKHCPIMRSVKIILLALDSKEWMPGVNGQQYQLGRRILERHRYRSLEPQQFGLYNIKYIASGDFHCFAIDHSHNVYAWGLNQYGQCALTGDNGELEDGSVLMKPTLIPELSHKGIKEIAAGEHHTLALTEDGQVYAWGRYDMKEIGIPKDKLPKSTFKINTGTHGSFSFLQNLFAVKIKTIGVGSHHSFAVTEDGVVYAWGFAETYGPGLGPSIDDVEKPTRIVNTATKNEDILLIGAGGQFSVSGGVKFEDEEKAEVRLDKYEDLE</sequence>
<gene>
    <name type="primary">RCC1</name>
</gene>
<dbReference type="EMBL" id="X96850">
    <property type="protein sequence ID" value="CAA65595.1"/>
    <property type="molecule type" value="Genomic_DNA"/>
</dbReference>
<dbReference type="SMR" id="P52499"/>
<dbReference type="VEuPathDB" id="FungiDB:C7_02780W_A"/>
<dbReference type="VEuPathDB" id="FungiDB:CAWG_05612"/>
<dbReference type="GO" id="GO:0000785">
    <property type="term" value="C:chromatin"/>
    <property type="evidence" value="ECO:0007669"/>
    <property type="project" value="EnsemblFungi"/>
</dbReference>
<dbReference type="GO" id="GO:0005737">
    <property type="term" value="C:cytoplasm"/>
    <property type="evidence" value="ECO:0007669"/>
    <property type="project" value="EnsemblFungi"/>
</dbReference>
<dbReference type="GO" id="GO:0005634">
    <property type="term" value="C:nucleus"/>
    <property type="evidence" value="ECO:0007669"/>
    <property type="project" value="UniProtKB-SubCell"/>
</dbReference>
<dbReference type="GO" id="GO:0005085">
    <property type="term" value="F:guanyl-nucleotide exchange factor activity"/>
    <property type="evidence" value="ECO:0007669"/>
    <property type="project" value="UniProtKB-KW"/>
</dbReference>
<dbReference type="GO" id="GO:0051301">
    <property type="term" value="P:cell division"/>
    <property type="evidence" value="ECO:0007669"/>
    <property type="project" value="UniProtKB-KW"/>
</dbReference>
<dbReference type="GO" id="GO:0006997">
    <property type="term" value="P:nucleus organization"/>
    <property type="evidence" value="ECO:0007669"/>
    <property type="project" value="EnsemblFungi"/>
</dbReference>
<dbReference type="GO" id="GO:0016973">
    <property type="term" value="P:poly(A)+ mRNA export from nucleus"/>
    <property type="evidence" value="ECO:0007669"/>
    <property type="project" value="EnsemblFungi"/>
</dbReference>
<dbReference type="GO" id="GO:0006606">
    <property type="term" value="P:protein import into nucleus"/>
    <property type="evidence" value="ECO:0007669"/>
    <property type="project" value="EnsemblFungi"/>
</dbReference>
<dbReference type="GO" id="GO:0000054">
    <property type="term" value="P:ribosomal subunit export from nucleus"/>
    <property type="evidence" value="ECO:0007669"/>
    <property type="project" value="EnsemblFungi"/>
</dbReference>
<dbReference type="Gene3D" id="2.130.10.30">
    <property type="entry name" value="Regulator of chromosome condensation 1/beta-lactamase-inhibitor protein II"/>
    <property type="match status" value="1"/>
</dbReference>
<dbReference type="InterPro" id="IPR051553">
    <property type="entry name" value="Ran_GTPase-activating"/>
</dbReference>
<dbReference type="InterPro" id="IPR009091">
    <property type="entry name" value="RCC1/BLIP-II"/>
</dbReference>
<dbReference type="InterPro" id="IPR000408">
    <property type="entry name" value="Reg_chr_condens"/>
</dbReference>
<dbReference type="PANTHER" id="PTHR45982">
    <property type="entry name" value="REGULATOR OF CHROMOSOME CONDENSATION"/>
    <property type="match status" value="1"/>
</dbReference>
<dbReference type="PANTHER" id="PTHR45982:SF1">
    <property type="entry name" value="REGULATOR OF CHROMOSOME CONDENSATION"/>
    <property type="match status" value="1"/>
</dbReference>
<dbReference type="Pfam" id="PF25390">
    <property type="entry name" value="WD40_RLD"/>
    <property type="match status" value="1"/>
</dbReference>
<dbReference type="PRINTS" id="PR00633">
    <property type="entry name" value="RCCNDNSATION"/>
</dbReference>
<dbReference type="SUPFAM" id="SSF50985">
    <property type="entry name" value="RCC1/BLIP-II"/>
    <property type="match status" value="1"/>
</dbReference>
<dbReference type="PROSITE" id="PS00625">
    <property type="entry name" value="RCC1_1"/>
    <property type="match status" value="1"/>
</dbReference>
<dbReference type="PROSITE" id="PS00626">
    <property type="entry name" value="RCC1_2"/>
    <property type="match status" value="1"/>
</dbReference>
<dbReference type="PROSITE" id="PS50012">
    <property type="entry name" value="RCC1_3"/>
    <property type="match status" value="5"/>
</dbReference>
<reference key="1">
    <citation type="submission" date="1996-03" db="EMBL/GenBank/DDBJ databases">
        <authorList>
            <person name="Nolan T."/>
            <person name="Rosamond J."/>
        </authorList>
    </citation>
    <scope>NUCLEOTIDE SEQUENCE [GENOMIC DNA]</scope>
    <source>
        <strain>CA124</strain>
    </source>
</reference>
<evidence type="ECO:0000250" key="1"/>
<evidence type="ECO:0000256" key="2">
    <source>
        <dbReference type="SAM" id="MobiDB-lite"/>
    </source>
</evidence>
<comment type="function">
    <text evidence="1">Promotes the exchange of Ran(SPI1)-bound GDP by GTP. Involved in the control of mitosis. Regulates a variety of nuclear events, including mitotic check-point, chromosome decondensation and mRNA processing/transport (By similarity).</text>
</comment>
<comment type="subcellular location">
    <subcellularLocation>
        <location evidence="1">Nucleus</location>
    </subcellularLocation>
</comment>
<protein>
    <recommendedName>
        <fullName>Protein RCC1</fullName>
    </recommendedName>
</protein>